<feature type="chain" id="PRO_0000126494" description="Small ribosomal subunit protein uS8">
    <location>
        <begin position="1"/>
        <end position="132"/>
    </location>
</feature>
<accession>P49399</accession>
<accession>Q9L0C6</accession>
<reference key="1">
    <citation type="journal article" date="2002" name="Nature">
        <title>Complete genome sequence of the model actinomycete Streptomyces coelicolor A3(2).</title>
        <authorList>
            <person name="Bentley S.D."/>
            <person name="Chater K.F."/>
            <person name="Cerdeno-Tarraga A.-M."/>
            <person name="Challis G.L."/>
            <person name="Thomson N.R."/>
            <person name="James K.D."/>
            <person name="Harris D.E."/>
            <person name="Quail M.A."/>
            <person name="Kieser H."/>
            <person name="Harper D."/>
            <person name="Bateman A."/>
            <person name="Brown S."/>
            <person name="Chandra G."/>
            <person name="Chen C.W."/>
            <person name="Collins M."/>
            <person name="Cronin A."/>
            <person name="Fraser A."/>
            <person name="Goble A."/>
            <person name="Hidalgo J."/>
            <person name="Hornsby T."/>
            <person name="Howarth S."/>
            <person name="Huang C.-H."/>
            <person name="Kieser T."/>
            <person name="Larke L."/>
            <person name="Murphy L.D."/>
            <person name="Oliver K."/>
            <person name="O'Neil S."/>
            <person name="Rabbinowitsch E."/>
            <person name="Rajandream M.A."/>
            <person name="Rutherford K.M."/>
            <person name="Rutter S."/>
            <person name="Seeger K."/>
            <person name="Saunders D."/>
            <person name="Sharp S."/>
            <person name="Squares R."/>
            <person name="Squares S."/>
            <person name="Taylor K."/>
            <person name="Warren T."/>
            <person name="Wietzorrek A."/>
            <person name="Woodward J.R."/>
            <person name="Barrell B.G."/>
            <person name="Parkhill J."/>
            <person name="Hopwood D.A."/>
        </authorList>
    </citation>
    <scope>NUCLEOTIDE SEQUENCE [LARGE SCALE GENOMIC DNA]</scope>
    <source>
        <strain>ATCC BAA-471 / A3(2) / M145</strain>
    </source>
</reference>
<reference key="2">
    <citation type="submission" date="1994-12" db="EMBL/GenBank/DDBJ databases">
        <authorList>
            <person name="Loriaux A."/>
            <person name="Brans A."/>
            <person name="Dusart J."/>
        </authorList>
    </citation>
    <scope>NUCLEOTIDE SEQUENCE [GENOMIC DNA] OF 12-132</scope>
    <source>
        <strain>A3(2) / NRRL B-16638</strain>
    </source>
</reference>
<dbReference type="EMBL" id="AL939121">
    <property type="protein sequence ID" value="CAB82084.1"/>
    <property type="molecule type" value="Genomic_DNA"/>
</dbReference>
<dbReference type="EMBL" id="X83011">
    <property type="status" value="NOT_ANNOTATED_CDS"/>
    <property type="molecule type" value="Genomic_DNA"/>
</dbReference>
<dbReference type="PIR" id="S50000">
    <property type="entry name" value="S50000"/>
</dbReference>
<dbReference type="RefSeq" id="NP_628875.1">
    <property type="nucleotide sequence ID" value="NC_003888.3"/>
</dbReference>
<dbReference type="RefSeq" id="WP_003974254.1">
    <property type="nucleotide sequence ID" value="NZ_VNID01000016.1"/>
</dbReference>
<dbReference type="SMR" id="P49399"/>
<dbReference type="FunCoup" id="P49399">
    <property type="interactions" value="269"/>
</dbReference>
<dbReference type="STRING" id="100226.gene:17762365"/>
<dbReference type="PaxDb" id="100226-SCO4716"/>
<dbReference type="GeneID" id="97462944"/>
<dbReference type="KEGG" id="sco:SCO4716"/>
<dbReference type="PATRIC" id="fig|100226.15.peg.4787"/>
<dbReference type="eggNOG" id="COG0096">
    <property type="taxonomic scope" value="Bacteria"/>
</dbReference>
<dbReference type="HOGENOM" id="CLU_098428_0_1_11"/>
<dbReference type="InParanoid" id="P49399"/>
<dbReference type="OrthoDB" id="9802617at2"/>
<dbReference type="PhylomeDB" id="P49399"/>
<dbReference type="Proteomes" id="UP000001973">
    <property type="component" value="Chromosome"/>
</dbReference>
<dbReference type="GO" id="GO:0022627">
    <property type="term" value="C:cytosolic small ribosomal subunit"/>
    <property type="evidence" value="ECO:0000318"/>
    <property type="project" value="GO_Central"/>
</dbReference>
<dbReference type="GO" id="GO:0019843">
    <property type="term" value="F:rRNA binding"/>
    <property type="evidence" value="ECO:0007669"/>
    <property type="project" value="UniProtKB-UniRule"/>
</dbReference>
<dbReference type="GO" id="GO:0003735">
    <property type="term" value="F:structural constituent of ribosome"/>
    <property type="evidence" value="ECO:0000318"/>
    <property type="project" value="GO_Central"/>
</dbReference>
<dbReference type="GO" id="GO:0006412">
    <property type="term" value="P:translation"/>
    <property type="evidence" value="ECO:0007669"/>
    <property type="project" value="UniProtKB-UniRule"/>
</dbReference>
<dbReference type="FunFam" id="3.30.1370.30:FF:000002">
    <property type="entry name" value="30S ribosomal protein S8"/>
    <property type="match status" value="1"/>
</dbReference>
<dbReference type="FunFam" id="3.30.1490.10:FF:000001">
    <property type="entry name" value="30S ribosomal protein S8"/>
    <property type="match status" value="1"/>
</dbReference>
<dbReference type="Gene3D" id="3.30.1370.30">
    <property type="match status" value="1"/>
</dbReference>
<dbReference type="Gene3D" id="3.30.1490.10">
    <property type="match status" value="1"/>
</dbReference>
<dbReference type="HAMAP" id="MF_01302_B">
    <property type="entry name" value="Ribosomal_uS8_B"/>
    <property type="match status" value="1"/>
</dbReference>
<dbReference type="InterPro" id="IPR000630">
    <property type="entry name" value="Ribosomal_uS8"/>
</dbReference>
<dbReference type="InterPro" id="IPR035987">
    <property type="entry name" value="Ribosomal_uS8_sf"/>
</dbReference>
<dbReference type="NCBIfam" id="NF001109">
    <property type="entry name" value="PRK00136.1"/>
    <property type="match status" value="1"/>
</dbReference>
<dbReference type="PANTHER" id="PTHR11758">
    <property type="entry name" value="40S RIBOSOMAL PROTEIN S15A"/>
    <property type="match status" value="1"/>
</dbReference>
<dbReference type="Pfam" id="PF00410">
    <property type="entry name" value="Ribosomal_S8"/>
    <property type="match status" value="1"/>
</dbReference>
<dbReference type="SUPFAM" id="SSF56047">
    <property type="entry name" value="Ribosomal protein S8"/>
    <property type="match status" value="1"/>
</dbReference>
<sequence>MTMTDPIADMLTRLRNANSAYHDSVTMPASKIKSHIAEILQQEGFITGWKTEDAEVGKNLTLELKFGPNRERSIAGIKRISKPGLRVYAKSTNLPKVLGGLGVAIISTSHGLLTDKQAGKKGVGGEVLAYVW</sequence>
<gene>
    <name evidence="1" type="primary">rpsH</name>
    <name type="ordered locus">SCO4716</name>
    <name type="ORF">SCD31.41</name>
</gene>
<name>RS8_STRCO</name>
<organism>
    <name type="scientific">Streptomyces coelicolor (strain ATCC BAA-471 / A3(2) / M145)</name>
    <dbReference type="NCBI Taxonomy" id="100226"/>
    <lineage>
        <taxon>Bacteria</taxon>
        <taxon>Bacillati</taxon>
        <taxon>Actinomycetota</taxon>
        <taxon>Actinomycetes</taxon>
        <taxon>Kitasatosporales</taxon>
        <taxon>Streptomycetaceae</taxon>
        <taxon>Streptomyces</taxon>
        <taxon>Streptomyces albidoflavus group</taxon>
    </lineage>
</organism>
<keyword id="KW-1185">Reference proteome</keyword>
<keyword id="KW-0687">Ribonucleoprotein</keyword>
<keyword id="KW-0689">Ribosomal protein</keyword>
<keyword id="KW-0694">RNA-binding</keyword>
<keyword id="KW-0699">rRNA-binding</keyword>
<proteinExistence type="inferred from homology"/>
<comment type="function">
    <text evidence="1">One of the primary rRNA binding proteins, it binds directly to 16S rRNA central domain where it helps coordinate assembly of the platform of the 30S subunit.</text>
</comment>
<comment type="subunit">
    <text evidence="1">Part of the 30S ribosomal subunit. Contacts proteins S5 and S12.</text>
</comment>
<comment type="similarity">
    <text evidence="1">Belongs to the universal ribosomal protein uS8 family.</text>
</comment>
<evidence type="ECO:0000255" key="1">
    <source>
        <dbReference type="HAMAP-Rule" id="MF_01302"/>
    </source>
</evidence>
<evidence type="ECO:0000305" key="2"/>
<protein>
    <recommendedName>
        <fullName evidence="1">Small ribosomal subunit protein uS8</fullName>
    </recommendedName>
    <alternativeName>
        <fullName evidence="2">30S ribosomal protein S8</fullName>
    </alternativeName>
</protein>